<dbReference type="EC" id="3.1.1.4"/>
<dbReference type="Allergome" id="6323">
    <property type="allergen name" value="Lac mu 1"/>
</dbReference>
<dbReference type="GO" id="GO:0005576">
    <property type="term" value="C:extracellular region"/>
    <property type="evidence" value="ECO:0007669"/>
    <property type="project" value="UniProtKB-SubCell"/>
</dbReference>
<dbReference type="GO" id="GO:0005509">
    <property type="term" value="F:calcium ion binding"/>
    <property type="evidence" value="ECO:0007669"/>
    <property type="project" value="InterPro"/>
</dbReference>
<dbReference type="GO" id="GO:0047498">
    <property type="term" value="F:calcium-dependent phospholipase A2 activity"/>
    <property type="evidence" value="ECO:0007669"/>
    <property type="project" value="TreeGrafter"/>
</dbReference>
<dbReference type="GO" id="GO:0005543">
    <property type="term" value="F:phospholipid binding"/>
    <property type="evidence" value="ECO:0007669"/>
    <property type="project" value="TreeGrafter"/>
</dbReference>
<dbReference type="GO" id="GO:0090729">
    <property type="term" value="F:toxin activity"/>
    <property type="evidence" value="ECO:0007669"/>
    <property type="project" value="UniProtKB-KW"/>
</dbReference>
<dbReference type="GO" id="GO:0050482">
    <property type="term" value="P:arachidonate secretion"/>
    <property type="evidence" value="ECO:0007669"/>
    <property type="project" value="InterPro"/>
</dbReference>
<dbReference type="GO" id="GO:0016042">
    <property type="term" value="P:lipid catabolic process"/>
    <property type="evidence" value="ECO:0007669"/>
    <property type="project" value="UniProtKB-KW"/>
</dbReference>
<dbReference type="GO" id="GO:0042130">
    <property type="term" value="P:negative regulation of T cell proliferation"/>
    <property type="evidence" value="ECO:0007669"/>
    <property type="project" value="TreeGrafter"/>
</dbReference>
<dbReference type="GO" id="GO:0006644">
    <property type="term" value="P:phospholipid metabolic process"/>
    <property type="evidence" value="ECO:0007669"/>
    <property type="project" value="InterPro"/>
</dbReference>
<dbReference type="CDD" id="cd00125">
    <property type="entry name" value="PLA2c"/>
    <property type="match status" value="1"/>
</dbReference>
<dbReference type="FunFam" id="1.20.90.10:FF:000001">
    <property type="entry name" value="Basic phospholipase A2 homolog"/>
    <property type="match status" value="1"/>
</dbReference>
<dbReference type="Gene3D" id="1.20.90.10">
    <property type="entry name" value="Phospholipase A2 domain"/>
    <property type="match status" value="1"/>
</dbReference>
<dbReference type="InterPro" id="IPR001211">
    <property type="entry name" value="PLipase_A2"/>
</dbReference>
<dbReference type="InterPro" id="IPR033112">
    <property type="entry name" value="PLipase_A2_Asp_AS"/>
</dbReference>
<dbReference type="InterPro" id="IPR016090">
    <property type="entry name" value="PLipase_A2_dom"/>
</dbReference>
<dbReference type="InterPro" id="IPR036444">
    <property type="entry name" value="PLipase_A2_dom_sf"/>
</dbReference>
<dbReference type="InterPro" id="IPR033113">
    <property type="entry name" value="PLipase_A2_His_AS"/>
</dbReference>
<dbReference type="PANTHER" id="PTHR11716">
    <property type="entry name" value="PHOSPHOLIPASE A2 FAMILY MEMBER"/>
    <property type="match status" value="1"/>
</dbReference>
<dbReference type="PANTHER" id="PTHR11716:SF9">
    <property type="entry name" value="PHOSPHOLIPASE A2, MEMBRANE ASSOCIATED"/>
    <property type="match status" value="1"/>
</dbReference>
<dbReference type="Pfam" id="PF00068">
    <property type="entry name" value="Phospholip_A2_1"/>
    <property type="match status" value="1"/>
</dbReference>
<dbReference type="PRINTS" id="PR00389">
    <property type="entry name" value="PHPHLIPASEA2"/>
</dbReference>
<dbReference type="SMART" id="SM00085">
    <property type="entry name" value="PA2c"/>
    <property type="match status" value="1"/>
</dbReference>
<dbReference type="SUPFAM" id="SSF48619">
    <property type="entry name" value="Phospholipase A2, PLA2"/>
    <property type="match status" value="1"/>
</dbReference>
<dbReference type="PROSITE" id="PS00119">
    <property type="entry name" value="PA2_ASP"/>
    <property type="match status" value="1"/>
</dbReference>
<dbReference type="PROSITE" id="PS00118">
    <property type="entry name" value="PA2_HIS"/>
    <property type="match status" value="1"/>
</dbReference>
<sequence length="122" mass="14284">HLLKFNKMIKFETRKNAIPFYAFYGCYCGWGGRXXXXXXXXXCCFVHDCCYGKXXXXXXXWDLYRYSLKSGYLTCGKGTWCEEQICECDRVAAECLRRSLSTYKYGYMFYPDSRCRGPSETC</sequence>
<organism>
    <name type="scientific">Lachesis muta muta</name>
    <name type="common">Bushmaster</name>
    <dbReference type="NCBI Taxonomy" id="8753"/>
    <lineage>
        <taxon>Eukaryota</taxon>
        <taxon>Metazoa</taxon>
        <taxon>Chordata</taxon>
        <taxon>Craniata</taxon>
        <taxon>Vertebrata</taxon>
        <taxon>Euteleostomi</taxon>
        <taxon>Lepidosauria</taxon>
        <taxon>Squamata</taxon>
        <taxon>Bifurcata</taxon>
        <taxon>Unidentata</taxon>
        <taxon>Episquamata</taxon>
        <taxon>Toxicofera</taxon>
        <taxon>Serpentes</taxon>
        <taxon>Colubroidea</taxon>
        <taxon>Viperidae</taxon>
        <taxon>Crotalinae</taxon>
        <taxon>Lachesis</taxon>
    </lineage>
</organism>
<keyword id="KW-0106">Calcium</keyword>
<keyword id="KW-0903">Direct protein sequencing</keyword>
<keyword id="KW-1015">Disulfide bond</keyword>
<keyword id="KW-0378">Hydrolase</keyword>
<keyword id="KW-0442">Lipid degradation</keyword>
<keyword id="KW-0443">Lipid metabolism</keyword>
<keyword id="KW-0479">Metal-binding</keyword>
<keyword id="KW-0959">Myotoxin</keyword>
<keyword id="KW-0528">Neurotoxin</keyword>
<keyword id="KW-0964">Secreted</keyword>
<keyword id="KW-0800">Toxin</keyword>
<feature type="chain" id="PRO_0000371713" description="Basic phospholipase A2 LmTX-I">
    <location>
        <begin position="1"/>
        <end position="122"/>
    </location>
</feature>
<feature type="active site" evidence="1">
    <location>
        <position position="47"/>
    </location>
</feature>
<feature type="active site" evidence="1">
    <location>
        <position position="89"/>
    </location>
</feature>
<feature type="binding site" evidence="1">
    <location>
        <position position="27"/>
    </location>
    <ligand>
        <name>Ca(2+)</name>
        <dbReference type="ChEBI" id="CHEBI:29108"/>
    </ligand>
</feature>
<feature type="binding site" evidence="1">
    <location>
        <position position="29"/>
    </location>
    <ligand>
        <name>Ca(2+)</name>
        <dbReference type="ChEBI" id="CHEBI:29108"/>
    </ligand>
</feature>
<feature type="binding site" evidence="1">
    <location>
        <position position="31"/>
    </location>
    <ligand>
        <name>Ca(2+)</name>
        <dbReference type="ChEBI" id="CHEBI:29108"/>
    </ligand>
</feature>
<feature type="binding site" evidence="1">
    <location>
        <position position="48"/>
    </location>
    <ligand>
        <name>Ca(2+)</name>
        <dbReference type="ChEBI" id="CHEBI:29108"/>
    </ligand>
</feature>
<feature type="disulfide bond" evidence="1">
    <location>
        <begin position="26"/>
        <end position="115"/>
    </location>
</feature>
<feature type="disulfide bond" evidence="1">
    <location>
        <begin position="28"/>
        <end position="44"/>
    </location>
</feature>
<feature type="disulfide bond" evidence="1">
    <location>
        <begin position="43"/>
        <end position="95"/>
    </location>
</feature>
<feature type="disulfide bond" evidence="1">
    <location>
        <begin position="49"/>
        <end position="122"/>
    </location>
</feature>
<feature type="disulfide bond" evidence="1">
    <location>
        <begin position="50"/>
        <end position="88"/>
    </location>
</feature>
<feature type="disulfide bond" evidence="1">
    <location>
        <begin position="75"/>
        <end position="86"/>
    </location>
</feature>
<feature type="unsure residue" description="L or I">
    <location>
        <position position="2"/>
    </location>
</feature>
<feature type="unsure residue" description="L or I">
    <location>
        <position position="3"/>
    </location>
</feature>
<feature type="unsure residue" description="K or Q">
    <location>
        <position position="4"/>
    </location>
</feature>
<feature type="unsure residue" description="I or L">
    <location>
        <position position="9"/>
    </location>
</feature>
<feature type="unsure residue" description="I or L">
    <location>
        <position position="18"/>
    </location>
</feature>
<feature type="unsure residue" description="L or I">
    <location>
        <position position="63"/>
    </location>
</feature>
<feature type="unsure residue" description="L or I">
    <location>
        <position position="68"/>
    </location>
</feature>
<feature type="unsure residue" description="L or I">
    <location>
        <position position="73"/>
    </location>
</feature>
<feature type="unsure residue" description="Q or K">
    <location>
        <position position="84"/>
    </location>
</feature>
<feature type="unsure residue" description="I or L">
    <location>
        <position position="85"/>
    </location>
</feature>
<feature type="unsure residue" description="L or I">
    <location>
        <position position="96"/>
    </location>
</feature>
<feature type="unsure residue" description="L or I">
    <location>
        <position position="100"/>
    </location>
</feature>
<reference key="1">
    <citation type="journal article" date="2005" name="Biochim. Biophys. Acta">
        <title>Biochemical and enzymatic characterization of two basic Asp49 phospholipase A2 isoforms from Lachesis muta muta (Surucucu) venom.</title>
        <authorList>
            <person name="Damico D.C.S."/>
            <person name="Lilla S."/>
            <person name="de Nucci G."/>
            <person name="Ponce-Soto L.A."/>
            <person name="Winck F.V."/>
            <person name="Novello J.C."/>
            <person name="Marangoni S."/>
        </authorList>
    </citation>
    <scope>PROTEIN SEQUENCE</scope>
    <scope>MASS SPECTROMETRY</scope>
    <scope>COFACTOR</scope>
    <scope>ACTIVITY REGULATION</scope>
    <scope>BIOPHYSICOCHEMICAL PROPERTIES</scope>
    <scope>SUBUNIT</scope>
    <source>
        <tissue>Venom</tissue>
    </source>
</reference>
<reference key="2">
    <citation type="journal article" date="2006" name="Toxicon">
        <title>Functional characterization of a basic D49 phospholipase A2 (LmTX-I) from the venom of the snake Lachesis muta muta (bushmaster).</title>
        <authorList>
            <person name="Damico D.C.S."/>
            <person name="Bueno L.G.F."/>
            <person name="Rodrigues-Simioni L."/>
            <person name="Marangoni S."/>
            <person name="da Cruz-Hofling M.A."/>
            <person name="Novello J.C."/>
        </authorList>
    </citation>
    <scope>FUNCTION</scope>
    <source>
        <tissue>Venom</tissue>
    </source>
</reference>
<reference key="3">
    <citation type="journal article" date="2007" name="Toxicon">
        <title>Cytotoxicity of Lachesis muta muta snake (bushmaster) venom and its purified basic phospholipase A2 (LmTX-I) in cultured cells.</title>
        <authorList>
            <person name="Damico D.C.S."/>
            <person name="Nascimento J.M."/>
            <person name="Lomonte B."/>
            <person name="Ponce-Soto L.A."/>
            <person name="Joazeiro P.P."/>
            <person name="Novello J.C."/>
            <person name="Marangoni S."/>
            <person name="Collares-Buzato C.B."/>
        </authorList>
    </citation>
    <scope>FUNCTION</scope>
    <source>
        <tissue>Venom</tissue>
    </source>
</reference>
<reference key="4">
    <citation type="journal article" date="2008" name="Protein J.">
        <title>Pharmacological study of edema and myonecrosis in mice induced by venom of the bushmaster snake (Lachesis muta muta) and its basic Asp49 phospholipase A(2) (LmTX-I).</title>
        <authorList>
            <person name="Damico D.C.S."/>
            <person name="da Cruz-Hofling M.A."/>
            <person name="Cintra M."/>
            <person name="Leonardo M.B."/>
            <person name="Calgarotto A.K."/>
            <person name="da Silva S.L."/>
            <person name="Marangoni S."/>
        </authorList>
    </citation>
    <scope>FUNCTION</scope>
    <source>
        <tissue>Venom</tissue>
    </source>
</reference>
<reference key="5">
    <citation type="journal article" date="2009" name="Toxicon">
        <title>Inflammatory oedema induced by Lachesis muta muta (Surucucu) venom and LmTX-I in the rat paw and dorsal skin.</title>
        <authorList>
            <person name="Ferreira T."/>
            <person name="Camargo E.A."/>
            <person name="Ribela M.T.C.P."/>
            <person name="Damico D.C.S."/>
            <person name="Marangoni S."/>
            <person name="Antunes E."/>
            <person name="De Nucci G."/>
            <person name="Landucci E.C.T."/>
        </authorList>
    </citation>
    <scope>FUNCTION</scope>
    <source>
        <tissue>Venom</tissue>
    </source>
</reference>
<proteinExistence type="evidence at protein level"/>
<comment type="function">
    <text evidence="5 6 7 8">Snake venom phospholipase A2 (PLA2) that displays neurotoxic and myotoxic activities. Induces inflammatory edema by mechanisms involving mast cell activation and arachidonic acid metabolites. Increases plasma creatine kinase activity. PLA2 catalyzes the calcium-dependent hydrolysis of the 2-acyl groups in 3-sn-phosphoglycerides.</text>
</comment>
<comment type="catalytic activity">
    <reaction evidence="2 3">
        <text>a 1,2-diacyl-sn-glycero-3-phosphocholine + H2O = a 1-acyl-sn-glycero-3-phosphocholine + a fatty acid + H(+)</text>
        <dbReference type="Rhea" id="RHEA:15801"/>
        <dbReference type="ChEBI" id="CHEBI:15377"/>
        <dbReference type="ChEBI" id="CHEBI:15378"/>
        <dbReference type="ChEBI" id="CHEBI:28868"/>
        <dbReference type="ChEBI" id="CHEBI:57643"/>
        <dbReference type="ChEBI" id="CHEBI:58168"/>
        <dbReference type="EC" id="3.1.1.4"/>
    </reaction>
</comment>
<comment type="cofactor">
    <cofactor evidence="4">
        <name>Ca(2+)</name>
        <dbReference type="ChEBI" id="CHEBI:29108"/>
    </cofactor>
    <text evidence="4">Binds 1 Ca(2+) ion.</text>
</comment>
<comment type="activity regulation">
    <text evidence="4">Inhibited by Mn(2+), Mg(2+), Zn(2+) and Cu(2+).</text>
</comment>
<comment type="biophysicochemical properties">
    <phDependence>
        <text evidence="4">Optimum pH is 8.0.</text>
    </phDependence>
    <temperatureDependence>
        <text evidence="4">Optimum temperature is 35-45 degrees Celsius.</text>
    </temperatureDependence>
</comment>
<comment type="subunit">
    <text evidence="4">Monomer.</text>
</comment>
<comment type="subcellular location">
    <subcellularLocation>
        <location>Secreted</location>
    </subcellularLocation>
</comment>
<comment type="tissue specificity">
    <text>Expressed by the venom gland.</text>
</comment>
<comment type="mass spectrometry" mass="14245.5" method="Electrospray" evidence="4"/>
<comment type="similarity">
    <text evidence="9">Belongs to the phospholipase A2 family. Group II subfamily. D49 sub-subfamily.</text>
</comment>
<accession>P0C942</accession>
<protein>
    <recommendedName>
        <fullName>Basic phospholipase A2 LmTX-I</fullName>
        <shortName>svPLA2</shortName>
        <ecNumber>3.1.1.4</ecNumber>
    </recommendedName>
    <alternativeName>
        <fullName>Phosphatidylcholine 2-acylhydrolase</fullName>
    </alternativeName>
</protein>
<evidence type="ECO:0000250" key="1"/>
<evidence type="ECO:0000255" key="2">
    <source>
        <dbReference type="PROSITE-ProRule" id="PRU10035"/>
    </source>
</evidence>
<evidence type="ECO:0000255" key="3">
    <source>
        <dbReference type="PROSITE-ProRule" id="PRU10036"/>
    </source>
</evidence>
<evidence type="ECO:0000269" key="4">
    <source>
    </source>
</evidence>
<evidence type="ECO:0000269" key="5">
    <source>
    </source>
</evidence>
<evidence type="ECO:0000269" key="6">
    <source>
    </source>
</evidence>
<evidence type="ECO:0000269" key="7">
    <source>
    </source>
</evidence>
<evidence type="ECO:0000269" key="8">
    <source>
    </source>
</evidence>
<evidence type="ECO:0000305" key="9"/>
<name>PA2B1_LACMU</name>